<evidence type="ECO:0000255" key="1">
    <source>
        <dbReference type="HAMAP-Rule" id="MF_00464"/>
    </source>
</evidence>
<organism>
    <name type="scientific">Clostridium botulinum (strain Loch Maree / Type A3)</name>
    <dbReference type="NCBI Taxonomy" id="498214"/>
    <lineage>
        <taxon>Bacteria</taxon>
        <taxon>Bacillati</taxon>
        <taxon>Bacillota</taxon>
        <taxon>Clostridia</taxon>
        <taxon>Eubacteriales</taxon>
        <taxon>Clostridiaceae</taxon>
        <taxon>Clostridium</taxon>
    </lineage>
</organism>
<sequence>MKYSGYHLVIDLFGCNFDQLENTEYMIEMLKKLAEALDTTIIAKAFHKFHPQGFSGALIISESHITIHTWPEDAYIGIDIFTCSKCFDSRKIVAYLKENLIFKKAEIKEILRGKID</sequence>
<name>SPEH_CLOBM</name>
<reference key="1">
    <citation type="journal article" date="2007" name="PLoS ONE">
        <title>Analysis of the neurotoxin complex genes in Clostridium botulinum A1-A4 and B1 strains: BoNT/A3, /Ba4 and /B1 clusters are located within plasmids.</title>
        <authorList>
            <person name="Smith T.J."/>
            <person name="Hill K.K."/>
            <person name="Foley B.T."/>
            <person name="Detter J.C."/>
            <person name="Munk A.C."/>
            <person name="Bruce D.C."/>
            <person name="Doggett N.A."/>
            <person name="Smith L.A."/>
            <person name="Marks J.D."/>
            <person name="Xie G."/>
            <person name="Brettin T.S."/>
        </authorList>
    </citation>
    <scope>NUCLEOTIDE SEQUENCE [LARGE SCALE GENOMIC DNA]</scope>
    <source>
        <strain>Loch Maree / Type A3</strain>
    </source>
</reference>
<dbReference type="EC" id="4.1.1.50" evidence="1"/>
<dbReference type="EMBL" id="CP000962">
    <property type="protein sequence ID" value="ACA55994.1"/>
    <property type="molecule type" value="Genomic_DNA"/>
</dbReference>
<dbReference type="RefSeq" id="WP_003360323.1">
    <property type="nucleotide sequence ID" value="NC_010520.1"/>
</dbReference>
<dbReference type="SMR" id="B1L242"/>
<dbReference type="KEGG" id="cbl:CLK_2779"/>
<dbReference type="HOGENOM" id="CLU_125470_2_3_9"/>
<dbReference type="UniPathway" id="UPA00331">
    <property type="reaction ID" value="UER00451"/>
</dbReference>
<dbReference type="GO" id="GO:0005829">
    <property type="term" value="C:cytosol"/>
    <property type="evidence" value="ECO:0007669"/>
    <property type="project" value="TreeGrafter"/>
</dbReference>
<dbReference type="GO" id="GO:0004014">
    <property type="term" value="F:adenosylmethionine decarboxylase activity"/>
    <property type="evidence" value="ECO:0007669"/>
    <property type="project" value="UniProtKB-UniRule"/>
</dbReference>
<dbReference type="GO" id="GO:0008295">
    <property type="term" value="P:spermidine biosynthetic process"/>
    <property type="evidence" value="ECO:0007669"/>
    <property type="project" value="UniProtKB-UniRule"/>
</dbReference>
<dbReference type="FunFam" id="3.60.90.10:FF:000012">
    <property type="entry name" value="S-adenosylmethionine decarboxylase proenzyme"/>
    <property type="match status" value="1"/>
</dbReference>
<dbReference type="Gene3D" id="3.60.90.10">
    <property type="entry name" value="S-adenosylmethionine decarboxylase"/>
    <property type="match status" value="1"/>
</dbReference>
<dbReference type="HAMAP" id="MF_00464">
    <property type="entry name" value="AdoMetDC_1"/>
    <property type="match status" value="1"/>
</dbReference>
<dbReference type="InterPro" id="IPR003826">
    <property type="entry name" value="AdoMetDC_fam_prok"/>
</dbReference>
<dbReference type="InterPro" id="IPR016067">
    <property type="entry name" value="S-AdoMet_deCO2ase_core"/>
</dbReference>
<dbReference type="InterPro" id="IPR017716">
    <property type="entry name" value="S-AdoMet_deCOase_pro-enz"/>
</dbReference>
<dbReference type="NCBIfam" id="TIGR03330">
    <property type="entry name" value="SAM_DCase_Bsu"/>
    <property type="match status" value="1"/>
</dbReference>
<dbReference type="PANTHER" id="PTHR33866">
    <property type="entry name" value="S-ADENOSYLMETHIONINE DECARBOXYLASE PROENZYME"/>
    <property type="match status" value="1"/>
</dbReference>
<dbReference type="PANTHER" id="PTHR33866:SF2">
    <property type="entry name" value="S-ADENOSYLMETHIONINE DECARBOXYLASE PROENZYME"/>
    <property type="match status" value="1"/>
</dbReference>
<dbReference type="Pfam" id="PF02675">
    <property type="entry name" value="AdoMet_dc"/>
    <property type="match status" value="1"/>
</dbReference>
<dbReference type="SUPFAM" id="SSF56276">
    <property type="entry name" value="S-adenosylmethionine decarboxylase"/>
    <property type="match status" value="1"/>
</dbReference>
<comment type="function">
    <text evidence="1">Catalyzes the decarboxylation of S-adenosylmethionine to S-adenosylmethioninamine (dcAdoMet), the propylamine donor required for the synthesis of the polyamines spermine and spermidine from the diamine putrescine.</text>
</comment>
<comment type="catalytic activity">
    <reaction evidence="1">
        <text>S-adenosyl-L-methionine + H(+) = S-adenosyl 3-(methylsulfanyl)propylamine + CO2</text>
        <dbReference type="Rhea" id="RHEA:15981"/>
        <dbReference type="ChEBI" id="CHEBI:15378"/>
        <dbReference type="ChEBI" id="CHEBI:16526"/>
        <dbReference type="ChEBI" id="CHEBI:57443"/>
        <dbReference type="ChEBI" id="CHEBI:59789"/>
        <dbReference type="EC" id="4.1.1.50"/>
    </reaction>
</comment>
<comment type="cofactor">
    <cofactor evidence="1">
        <name>pyruvate</name>
        <dbReference type="ChEBI" id="CHEBI:15361"/>
    </cofactor>
    <text evidence="1">Binds 1 pyruvoyl group covalently per subunit.</text>
</comment>
<comment type="pathway">
    <text evidence="1">Amine and polyamine biosynthesis; S-adenosylmethioninamine biosynthesis; S-adenosylmethioninamine from S-adenosyl-L-methionine: step 1/1.</text>
</comment>
<comment type="subunit">
    <text evidence="1">Heterotetramer of two alpha and two beta chains arranged as a dimer of alpha/beta heterodimers.</text>
</comment>
<comment type="PTM">
    <text evidence="1">Is synthesized initially as an inactive proenzyme. Formation of the active enzyme involves a self-maturation process in which the active site pyruvoyl group is generated from an internal serine residue via an autocatalytic post-translational modification. Two non-identical subunits are generated from the proenzyme in this reaction, and the pyruvate is formed at the N-terminus of the alpha chain, which is derived from the carboxyl end of the proenzyme. The post-translation cleavage follows an unusual pathway, termed non-hydrolytic serinolysis, in which the side chain hydroxyl group of the serine supplies its oxygen atom to form the C-terminus of the beta chain, while the remainder of the serine residue undergoes an oxidative deamination to produce ammonia and the pyruvoyl group blocking the N-terminus of the alpha chain.</text>
</comment>
<comment type="similarity">
    <text evidence="1">Belongs to the prokaryotic AdoMetDC family. Type 1 subfamily.</text>
</comment>
<feature type="chain" id="PRO_1000193183" description="S-adenosylmethionine decarboxylase beta chain" evidence="1">
    <location>
        <begin position="1"/>
        <end position="62"/>
    </location>
</feature>
<feature type="chain" id="PRO_1000193184" description="S-adenosylmethionine decarboxylase alpha chain" evidence="1">
    <location>
        <begin position="63"/>
        <end position="116"/>
    </location>
</feature>
<feature type="active site" description="Schiff-base intermediate with substrate; via pyruvic acid" evidence="1">
    <location>
        <position position="63"/>
    </location>
</feature>
<feature type="active site" description="Proton acceptor; for processing activity" evidence="1">
    <location>
        <position position="68"/>
    </location>
</feature>
<feature type="active site" description="Proton donor; for catalytic activity" evidence="1">
    <location>
        <position position="83"/>
    </location>
</feature>
<feature type="site" description="Cleavage (non-hydrolytic); by autolysis" evidence="1">
    <location>
        <begin position="62"/>
        <end position="63"/>
    </location>
</feature>
<feature type="modified residue" description="Pyruvic acid (Ser); by autocatalysis" evidence="1">
    <location>
        <position position="63"/>
    </location>
</feature>
<proteinExistence type="inferred from homology"/>
<keyword id="KW-0068">Autocatalytic cleavage</keyword>
<keyword id="KW-0210">Decarboxylase</keyword>
<keyword id="KW-0456">Lyase</keyword>
<keyword id="KW-0620">Polyamine biosynthesis</keyword>
<keyword id="KW-0670">Pyruvate</keyword>
<keyword id="KW-0949">S-adenosyl-L-methionine</keyword>
<keyword id="KW-0704">Schiff base</keyword>
<keyword id="KW-0745">Spermidine biosynthesis</keyword>
<keyword id="KW-0865">Zymogen</keyword>
<gene>
    <name evidence="1" type="primary">speH</name>
    <name type="ordered locus">CLK_2779</name>
</gene>
<accession>B1L242</accession>
<protein>
    <recommendedName>
        <fullName evidence="1">S-adenosylmethionine decarboxylase proenzyme</fullName>
        <shortName evidence="1">AdoMetDC</shortName>
        <shortName evidence="1">SAMDC</shortName>
        <ecNumber evidence="1">4.1.1.50</ecNumber>
    </recommendedName>
    <component>
        <recommendedName>
            <fullName evidence="1">S-adenosylmethionine decarboxylase beta chain</fullName>
        </recommendedName>
    </component>
    <component>
        <recommendedName>
            <fullName evidence="1">S-adenosylmethionine decarboxylase alpha chain</fullName>
        </recommendedName>
    </component>
</protein>